<evidence type="ECO:0000250" key="1"/>
<evidence type="ECO:0000255" key="2">
    <source>
        <dbReference type="PROSITE-ProRule" id="PRU00434"/>
    </source>
</evidence>
<evidence type="ECO:0000305" key="3"/>
<feature type="chain" id="PRO_0000092001" description="Putative ABC transporter ATP-binding protein CPE1583">
    <location>
        <begin position="1"/>
        <end position="568"/>
    </location>
</feature>
<feature type="domain" description="ABC transporter 1" evidence="2">
    <location>
        <begin position="7"/>
        <end position="248"/>
    </location>
</feature>
<feature type="domain" description="ABC transporter 2" evidence="2">
    <location>
        <begin position="303"/>
        <end position="536"/>
    </location>
</feature>
<feature type="binding site" evidence="2">
    <location>
        <begin position="41"/>
        <end position="48"/>
    </location>
    <ligand>
        <name>ATP</name>
        <dbReference type="ChEBI" id="CHEBI:30616"/>
        <label>1</label>
    </ligand>
</feature>
<feature type="binding site" evidence="2">
    <location>
        <begin position="336"/>
        <end position="343"/>
    </location>
    <ligand>
        <name>ATP</name>
        <dbReference type="ChEBI" id="CHEBI:30616"/>
        <label>2</label>
    </ligand>
</feature>
<proteinExistence type="inferred from homology"/>
<dbReference type="EC" id="7.-.-.-"/>
<dbReference type="EMBL" id="BA000016">
    <property type="protein sequence ID" value="BAB81289.1"/>
    <property type="molecule type" value="Genomic_DNA"/>
</dbReference>
<dbReference type="RefSeq" id="WP_011010521.1">
    <property type="nucleotide sequence ID" value="NC_003366.1"/>
</dbReference>
<dbReference type="SMR" id="Q8XK20"/>
<dbReference type="STRING" id="195102.gene:10490847"/>
<dbReference type="KEGG" id="cpe:CPE1583"/>
<dbReference type="HOGENOM" id="CLU_000604_86_7_9"/>
<dbReference type="Proteomes" id="UP000000818">
    <property type="component" value="Chromosome"/>
</dbReference>
<dbReference type="GO" id="GO:0043190">
    <property type="term" value="C:ATP-binding cassette (ABC) transporter complex"/>
    <property type="evidence" value="ECO:0007669"/>
    <property type="project" value="TreeGrafter"/>
</dbReference>
<dbReference type="GO" id="GO:0005524">
    <property type="term" value="F:ATP binding"/>
    <property type="evidence" value="ECO:0007669"/>
    <property type="project" value="UniProtKB-KW"/>
</dbReference>
<dbReference type="GO" id="GO:0016887">
    <property type="term" value="F:ATP hydrolysis activity"/>
    <property type="evidence" value="ECO:0007669"/>
    <property type="project" value="InterPro"/>
</dbReference>
<dbReference type="GO" id="GO:0042626">
    <property type="term" value="F:ATPase-coupled transmembrane transporter activity"/>
    <property type="evidence" value="ECO:0007669"/>
    <property type="project" value="TreeGrafter"/>
</dbReference>
<dbReference type="CDD" id="cd03225">
    <property type="entry name" value="ABC_cobalt_CbiO_domain1"/>
    <property type="match status" value="2"/>
</dbReference>
<dbReference type="FunFam" id="3.40.50.300:FF:001422">
    <property type="entry name" value="Cobalt ABC transporter ATP-binding protein"/>
    <property type="match status" value="1"/>
</dbReference>
<dbReference type="FunFam" id="3.40.50.300:FF:000224">
    <property type="entry name" value="Energy-coupling factor transporter ATP-binding protein EcfA"/>
    <property type="match status" value="1"/>
</dbReference>
<dbReference type="Gene3D" id="3.40.50.300">
    <property type="entry name" value="P-loop containing nucleotide triphosphate hydrolases"/>
    <property type="match status" value="2"/>
</dbReference>
<dbReference type="InterPro" id="IPR003593">
    <property type="entry name" value="AAA+_ATPase"/>
</dbReference>
<dbReference type="InterPro" id="IPR022216">
    <property type="entry name" value="ABC_Co_transporter"/>
</dbReference>
<dbReference type="InterPro" id="IPR003439">
    <property type="entry name" value="ABC_transporter-like_ATP-bd"/>
</dbReference>
<dbReference type="InterPro" id="IPR017871">
    <property type="entry name" value="ABC_transporter-like_CS"/>
</dbReference>
<dbReference type="InterPro" id="IPR015856">
    <property type="entry name" value="ABC_transpr_CbiO/EcfA_su"/>
</dbReference>
<dbReference type="InterPro" id="IPR050095">
    <property type="entry name" value="ECF_ABC_transporter_ATP-bd"/>
</dbReference>
<dbReference type="InterPro" id="IPR027417">
    <property type="entry name" value="P-loop_NTPase"/>
</dbReference>
<dbReference type="NCBIfam" id="NF010167">
    <property type="entry name" value="PRK13648.1"/>
    <property type="match status" value="2"/>
</dbReference>
<dbReference type="PANTHER" id="PTHR43553:SF26">
    <property type="entry name" value="ABC TRANSPORTER ATP-BINDING PROTEIN BC_2655-RELATED"/>
    <property type="match status" value="1"/>
</dbReference>
<dbReference type="PANTHER" id="PTHR43553">
    <property type="entry name" value="HEAVY METAL TRANSPORTER"/>
    <property type="match status" value="1"/>
</dbReference>
<dbReference type="Pfam" id="PF00005">
    <property type="entry name" value="ABC_tran"/>
    <property type="match status" value="2"/>
</dbReference>
<dbReference type="Pfam" id="PF12558">
    <property type="entry name" value="DUF3744"/>
    <property type="match status" value="1"/>
</dbReference>
<dbReference type="SMART" id="SM00382">
    <property type="entry name" value="AAA"/>
    <property type="match status" value="2"/>
</dbReference>
<dbReference type="SUPFAM" id="SSF52540">
    <property type="entry name" value="P-loop containing nucleoside triphosphate hydrolases"/>
    <property type="match status" value="2"/>
</dbReference>
<dbReference type="PROSITE" id="PS00211">
    <property type="entry name" value="ABC_TRANSPORTER_1"/>
    <property type="match status" value="2"/>
</dbReference>
<dbReference type="PROSITE" id="PS50893">
    <property type="entry name" value="ABC_TRANSPORTER_2"/>
    <property type="match status" value="2"/>
</dbReference>
<keyword id="KW-0067">ATP-binding</keyword>
<keyword id="KW-1003">Cell membrane</keyword>
<keyword id="KW-0472">Membrane</keyword>
<keyword id="KW-0547">Nucleotide-binding</keyword>
<keyword id="KW-1185">Reference proteome</keyword>
<keyword id="KW-0677">Repeat</keyword>
<keyword id="KW-1278">Translocase</keyword>
<keyword id="KW-0813">Transport</keyword>
<comment type="function">
    <text evidence="1">Probably part of an ABC transporter complex. Responsible for energy coupling to the transport system (By similarity).</text>
</comment>
<comment type="subcellular location">
    <subcellularLocation>
        <location evidence="1">Cell membrane</location>
        <topology evidence="1">Peripheral membrane protein</topology>
    </subcellularLocation>
</comment>
<comment type="similarity">
    <text evidence="3">Belongs to the ABC transporter superfamily.</text>
</comment>
<gene>
    <name type="ordered locus">CPE1583</name>
</gene>
<reference key="1">
    <citation type="journal article" date="2002" name="Proc. Natl. Acad. Sci. U.S.A.">
        <title>Complete genome sequence of Clostridium perfringens, an anaerobic flesh-eater.</title>
        <authorList>
            <person name="Shimizu T."/>
            <person name="Ohtani K."/>
            <person name="Hirakawa H."/>
            <person name="Ohshima K."/>
            <person name="Yamashita A."/>
            <person name="Shiba T."/>
            <person name="Ogasawara N."/>
            <person name="Hattori M."/>
            <person name="Kuhara S."/>
            <person name="Hayashi H."/>
        </authorList>
    </citation>
    <scope>NUCLEOTIDE SEQUENCE [LARGE SCALE GENOMIC DNA]</scope>
    <source>
        <strain>13 / Type A</strain>
    </source>
</reference>
<accession>Q8XK20</accession>
<sequence length="568" mass="63850">MERKAIIEFKDFTAHYTVQSKPTLNNINLTIYEGEKVLIAGPSGSGKSTLANCINGLIPFSTDIEISGSLKIKGKETKDLSVFEISKMVGTVLQDPDSQFIGLTVAEDIAFKLENNCVSQEEMKKKVNYVSKIVDIENRLDLAPYSLSGGQKQRVTLAGTIVDDVDILLFDEPLASLDPAAGKASIELIDKIQKEEKKTVIIIEHRLEEVLNCDVDRIILMNEGEIIADTNPNEILASNKLKECGIREPLYITALKYSGYELNKEMNLENIDKLKLSDDGEKLKTWYKSLNFNKKEREEDTLLEFKNVSFSYDKKKDILSDINFKINRGDIVSVVGKNGAGKSTISKIICGFFKESKGDILFEGKSLDGKTIKERGEEIGVVLQNPNQMISKTMIFDEVALGLRVRGIDEKEVKERVIETLKTCGLYPYRNWPVSALSFGQKKRVTIASILVLNPKVIILDEPTAGQDYKHYNEIMEFLLKLNKKGVTIILITHDMHLMLEYTDKAIVISNGRKIADTTSAEILTDKEVIEKASLKETSLYDLALKFKLEDPKDFVCKFIDFDRGARN</sequence>
<protein>
    <recommendedName>
        <fullName>Putative ABC transporter ATP-binding protein CPE1583</fullName>
        <ecNumber>7.-.-.-</ecNumber>
    </recommendedName>
</protein>
<organism>
    <name type="scientific">Clostridium perfringens (strain 13 / Type A)</name>
    <dbReference type="NCBI Taxonomy" id="195102"/>
    <lineage>
        <taxon>Bacteria</taxon>
        <taxon>Bacillati</taxon>
        <taxon>Bacillota</taxon>
        <taxon>Clostridia</taxon>
        <taxon>Eubacteriales</taxon>
        <taxon>Clostridiaceae</taxon>
        <taxon>Clostridium</taxon>
    </lineage>
</organism>
<name>Y1583_CLOPE</name>